<name>CYB_RANDY</name>
<accession>Q9T6R5</accession>
<evidence type="ECO:0000250" key="1"/>
<evidence type="ECO:0000250" key="2">
    <source>
        <dbReference type="UniProtKB" id="P00157"/>
    </source>
</evidence>
<evidence type="ECO:0000255" key="3">
    <source>
        <dbReference type="PROSITE-ProRule" id="PRU00967"/>
    </source>
</evidence>
<evidence type="ECO:0000255" key="4">
    <source>
        <dbReference type="PROSITE-ProRule" id="PRU00968"/>
    </source>
</evidence>
<gene>
    <name type="primary">mt-cyb</name>
    <name type="synonym">cob</name>
    <name type="synonym">cytb</name>
    <name type="synonym">mtcyb</name>
</gene>
<reference key="1">
    <citation type="journal article" date="1999" name="Korean J. Biol. Sci.">
        <title>Genetic differentiation of mitochondrial cytochrome b gene of the Korean Rana dybowskii (Amphibia: Ranidae).</title>
        <authorList>
            <person name="Kim Y.-R."/>
            <person name="Yang D.-E."/>
            <person name="Lee H."/>
            <person name="Lee J.-E."/>
            <person name="Lee H.-I."/>
            <person name="Yang S.-Y."/>
            <person name="Lee H.-Y."/>
        </authorList>
    </citation>
    <scope>NUCLEOTIDE SEQUENCE [GENOMIC DNA]</scope>
    <source>
        <strain>Isolate KS102752</strain>
    </source>
</reference>
<keyword id="KW-0249">Electron transport</keyword>
<keyword id="KW-0349">Heme</keyword>
<keyword id="KW-0408">Iron</keyword>
<keyword id="KW-0472">Membrane</keyword>
<keyword id="KW-0479">Metal-binding</keyword>
<keyword id="KW-0496">Mitochondrion</keyword>
<keyword id="KW-0999">Mitochondrion inner membrane</keyword>
<keyword id="KW-0679">Respiratory chain</keyword>
<keyword id="KW-0812">Transmembrane</keyword>
<keyword id="KW-1133">Transmembrane helix</keyword>
<keyword id="KW-0813">Transport</keyword>
<keyword id="KW-0830">Ubiquinone</keyword>
<comment type="function">
    <text evidence="2">Component of the ubiquinol-cytochrome c reductase complex (complex III or cytochrome b-c1 complex) that is part of the mitochondrial respiratory chain. The b-c1 complex mediates electron transfer from ubiquinol to cytochrome c. Contributes to the generation of a proton gradient across the mitochondrial membrane that is then used for ATP synthesis.</text>
</comment>
<comment type="cofactor">
    <cofactor evidence="2">
        <name>heme b</name>
        <dbReference type="ChEBI" id="CHEBI:60344"/>
    </cofactor>
    <text evidence="2">Binds 2 heme b groups non-covalently.</text>
</comment>
<comment type="subunit">
    <text evidence="2">The cytochrome bc1 complex contains 3 respiratory subunits (MT-CYB, CYC1 and UQCRFS1), 2 core proteins (UQCRC1 and UQCRC2) and probably 6 low-molecular weight proteins.</text>
</comment>
<comment type="subcellular location">
    <subcellularLocation>
        <location evidence="2">Mitochondrion inner membrane</location>
        <topology evidence="2">Multi-pass membrane protein</topology>
    </subcellularLocation>
</comment>
<comment type="miscellaneous">
    <text evidence="1">Heme 1 (or BL or b562) is low-potential and absorbs at about 562 nm, and heme 2 (or BH or b566) is high-potential and absorbs at about 566 nm.</text>
</comment>
<comment type="similarity">
    <text evidence="3 4">Belongs to the cytochrome b family.</text>
</comment>
<comment type="caution">
    <text evidence="2">The full-length protein contains only eight transmembrane helices, not nine as predicted by bioinformatics tools.</text>
</comment>
<dbReference type="EMBL" id="AF205091">
    <property type="protein sequence ID" value="AAF17090.1"/>
    <property type="molecule type" value="Genomic_DNA"/>
</dbReference>
<dbReference type="SMR" id="Q9T6R5"/>
<dbReference type="GO" id="GO:0005743">
    <property type="term" value="C:mitochondrial inner membrane"/>
    <property type="evidence" value="ECO:0007669"/>
    <property type="project" value="UniProtKB-SubCell"/>
</dbReference>
<dbReference type="GO" id="GO:0045275">
    <property type="term" value="C:respiratory chain complex III"/>
    <property type="evidence" value="ECO:0007669"/>
    <property type="project" value="InterPro"/>
</dbReference>
<dbReference type="GO" id="GO:0046872">
    <property type="term" value="F:metal ion binding"/>
    <property type="evidence" value="ECO:0007669"/>
    <property type="project" value="UniProtKB-KW"/>
</dbReference>
<dbReference type="GO" id="GO:0008121">
    <property type="term" value="F:ubiquinol-cytochrome-c reductase activity"/>
    <property type="evidence" value="ECO:0007669"/>
    <property type="project" value="InterPro"/>
</dbReference>
<dbReference type="GO" id="GO:0006122">
    <property type="term" value="P:mitochondrial electron transport, ubiquinol to cytochrome c"/>
    <property type="evidence" value="ECO:0007669"/>
    <property type="project" value="TreeGrafter"/>
</dbReference>
<dbReference type="CDD" id="cd00290">
    <property type="entry name" value="cytochrome_b_C"/>
    <property type="match status" value="1"/>
</dbReference>
<dbReference type="CDD" id="cd00284">
    <property type="entry name" value="Cytochrome_b_N"/>
    <property type="match status" value="1"/>
</dbReference>
<dbReference type="FunFam" id="1.20.810.10:FF:000002">
    <property type="entry name" value="Cytochrome b"/>
    <property type="match status" value="1"/>
</dbReference>
<dbReference type="Gene3D" id="1.20.810.10">
    <property type="entry name" value="Cytochrome Bc1 Complex, Chain C"/>
    <property type="match status" value="1"/>
</dbReference>
<dbReference type="InterPro" id="IPR005798">
    <property type="entry name" value="Cyt_b/b6_C"/>
</dbReference>
<dbReference type="InterPro" id="IPR036150">
    <property type="entry name" value="Cyt_b/b6_C_sf"/>
</dbReference>
<dbReference type="InterPro" id="IPR005797">
    <property type="entry name" value="Cyt_b/b6_N"/>
</dbReference>
<dbReference type="InterPro" id="IPR027387">
    <property type="entry name" value="Cytb/b6-like_sf"/>
</dbReference>
<dbReference type="InterPro" id="IPR030689">
    <property type="entry name" value="Cytochrome_b"/>
</dbReference>
<dbReference type="InterPro" id="IPR048260">
    <property type="entry name" value="Cytochrome_b_C_euk/bac"/>
</dbReference>
<dbReference type="InterPro" id="IPR048259">
    <property type="entry name" value="Cytochrome_b_N_euk/bac"/>
</dbReference>
<dbReference type="InterPro" id="IPR016174">
    <property type="entry name" value="Di-haem_cyt_TM"/>
</dbReference>
<dbReference type="PANTHER" id="PTHR19271">
    <property type="entry name" value="CYTOCHROME B"/>
    <property type="match status" value="1"/>
</dbReference>
<dbReference type="PANTHER" id="PTHR19271:SF16">
    <property type="entry name" value="CYTOCHROME B"/>
    <property type="match status" value="1"/>
</dbReference>
<dbReference type="Pfam" id="PF00032">
    <property type="entry name" value="Cytochrom_B_C"/>
    <property type="match status" value="1"/>
</dbReference>
<dbReference type="Pfam" id="PF00033">
    <property type="entry name" value="Cytochrome_B"/>
    <property type="match status" value="1"/>
</dbReference>
<dbReference type="PIRSF" id="PIRSF038885">
    <property type="entry name" value="COB"/>
    <property type="match status" value="1"/>
</dbReference>
<dbReference type="SUPFAM" id="SSF81648">
    <property type="entry name" value="a domain/subunit of cytochrome bc1 complex (Ubiquinol-cytochrome c reductase)"/>
    <property type="match status" value="1"/>
</dbReference>
<dbReference type="SUPFAM" id="SSF81342">
    <property type="entry name" value="Transmembrane di-heme cytochromes"/>
    <property type="match status" value="1"/>
</dbReference>
<dbReference type="PROSITE" id="PS51003">
    <property type="entry name" value="CYTB_CTER"/>
    <property type="match status" value="1"/>
</dbReference>
<dbReference type="PROSITE" id="PS51002">
    <property type="entry name" value="CYTB_NTER"/>
    <property type="match status" value="1"/>
</dbReference>
<proteinExistence type="inferred from homology"/>
<organism>
    <name type="scientific">Rana dybowskii</name>
    <name type="common">Dybovsky's frog</name>
    <name type="synonym">Korean brown frog</name>
    <dbReference type="NCBI Taxonomy" id="71582"/>
    <lineage>
        <taxon>Eukaryota</taxon>
        <taxon>Metazoa</taxon>
        <taxon>Chordata</taxon>
        <taxon>Craniata</taxon>
        <taxon>Vertebrata</taxon>
        <taxon>Euteleostomi</taxon>
        <taxon>Amphibia</taxon>
        <taxon>Batrachia</taxon>
        <taxon>Anura</taxon>
        <taxon>Neobatrachia</taxon>
        <taxon>Ranoidea</taxon>
        <taxon>Ranidae</taxon>
        <taxon>Rana</taxon>
        <taxon>Rana</taxon>
    </lineage>
</organism>
<sequence length="380" mass="42370">MAPTMRKSHPLLKIINGSFIDLPTPANISAWWNFGWLLGVCVIVQIATGLFLAMHYTADTSLAFSSIAHICRDVNNGWLLRNLHANGASFFFICIYFHIGRGLYYGSYLYKETWNIGVILLFLVMATAFVGYVLPWGQMSFWGATVITNLLSAAPYIGPDLVQWIWGGFSVDNATLTRFFTFHFILPFIIAAMSMIHLLFLHQTGSSNPTGLNSNLDKVSFHPYFSFKDLLGFIILLGALAILSTFAPNLLGDPDNFTPANPLVTPPHIKPEWYFLFAYAILRSIPNKLGGVLALLLSIMVLFLMPIIHTSKLRSLMFRPAAKAFFWALIANTIILTWIGGQPVEDPFISIGQIASGLYFLIFVLIIPTLGLLENKLLKI</sequence>
<protein>
    <recommendedName>
        <fullName>Cytochrome b</fullName>
    </recommendedName>
    <alternativeName>
        <fullName>Complex III subunit 3</fullName>
    </alternativeName>
    <alternativeName>
        <fullName>Complex III subunit III</fullName>
    </alternativeName>
    <alternativeName>
        <fullName>Cytochrome b-c1 complex subunit 3</fullName>
    </alternativeName>
    <alternativeName>
        <fullName>Ubiquinol-cytochrome-c reductase complex cytochrome b subunit</fullName>
    </alternativeName>
</protein>
<geneLocation type="mitochondrion"/>
<feature type="chain" id="PRO_0000061483" description="Cytochrome b">
    <location>
        <begin position="1"/>
        <end position="380"/>
    </location>
</feature>
<feature type="transmembrane region" description="Helical" evidence="2">
    <location>
        <begin position="34"/>
        <end position="54"/>
    </location>
</feature>
<feature type="transmembrane region" description="Helical" evidence="2">
    <location>
        <begin position="78"/>
        <end position="99"/>
    </location>
</feature>
<feature type="transmembrane region" description="Helical" evidence="2">
    <location>
        <begin position="114"/>
        <end position="134"/>
    </location>
</feature>
<feature type="transmembrane region" description="Helical" evidence="2">
    <location>
        <begin position="179"/>
        <end position="199"/>
    </location>
</feature>
<feature type="transmembrane region" description="Helical" evidence="2">
    <location>
        <begin position="227"/>
        <end position="247"/>
    </location>
</feature>
<feature type="transmembrane region" description="Helical" evidence="2">
    <location>
        <begin position="289"/>
        <end position="309"/>
    </location>
</feature>
<feature type="transmembrane region" description="Helical" evidence="2">
    <location>
        <begin position="321"/>
        <end position="341"/>
    </location>
</feature>
<feature type="transmembrane region" description="Helical" evidence="2">
    <location>
        <begin position="348"/>
        <end position="368"/>
    </location>
</feature>
<feature type="binding site" description="axial binding residue" evidence="2">
    <location>
        <position position="84"/>
    </location>
    <ligand>
        <name>heme b</name>
        <dbReference type="ChEBI" id="CHEBI:60344"/>
        <label>b562</label>
    </ligand>
    <ligandPart>
        <name>Fe</name>
        <dbReference type="ChEBI" id="CHEBI:18248"/>
    </ligandPart>
</feature>
<feature type="binding site" description="axial binding residue" evidence="2">
    <location>
        <position position="98"/>
    </location>
    <ligand>
        <name>heme b</name>
        <dbReference type="ChEBI" id="CHEBI:60344"/>
        <label>b566</label>
    </ligand>
    <ligandPart>
        <name>Fe</name>
        <dbReference type="ChEBI" id="CHEBI:18248"/>
    </ligandPart>
</feature>
<feature type="binding site" description="axial binding residue" evidence="2">
    <location>
        <position position="183"/>
    </location>
    <ligand>
        <name>heme b</name>
        <dbReference type="ChEBI" id="CHEBI:60344"/>
        <label>b562</label>
    </ligand>
    <ligandPart>
        <name>Fe</name>
        <dbReference type="ChEBI" id="CHEBI:18248"/>
    </ligandPart>
</feature>
<feature type="binding site" description="axial binding residue" evidence="2">
    <location>
        <position position="197"/>
    </location>
    <ligand>
        <name>heme b</name>
        <dbReference type="ChEBI" id="CHEBI:60344"/>
        <label>b566</label>
    </ligand>
    <ligandPart>
        <name>Fe</name>
        <dbReference type="ChEBI" id="CHEBI:18248"/>
    </ligandPart>
</feature>
<feature type="binding site" evidence="2">
    <location>
        <position position="202"/>
    </location>
    <ligand>
        <name>a ubiquinone</name>
        <dbReference type="ChEBI" id="CHEBI:16389"/>
    </ligand>
</feature>